<comment type="function">
    <text evidence="1 2">Involved in transcription. Probably functions as a transcriptional activator.</text>
</comment>
<comment type="subunit">
    <text evidence="2">Interacts with the TREX complex and RNA polymerase II.</text>
</comment>
<comment type="subcellular location">
    <subcellularLocation>
        <location evidence="2">Nucleus</location>
    </subcellularLocation>
    <text>Mainly nuclear, but might shuttle between the nucleus and the cytoplasm.</text>
</comment>
<comment type="miscellaneous">
    <text>Deletion causes a slow growth phenotype on synthetic medium at 37 degrees Celsius and leads to decreased transcription. Deletion has no effect on ribosome biogenesis or frequency of recombination. Deletion is synthetically lethal with a deletion of each of the THO complex subunits HPR1, MFT1, THO2, and THP2.</text>
</comment>
<comment type="similarity">
    <text evidence="4">Belongs to the SWT1 family.</text>
</comment>
<accession>Q12104</accession>
<accession>D6W2M4</accession>
<proteinExistence type="evidence at protein level"/>
<evidence type="ECO:0000269" key="1">
    <source>
    </source>
</evidence>
<evidence type="ECO:0000269" key="2">
    <source>
    </source>
</evidence>
<evidence type="ECO:0000303" key="3">
    <source>
    </source>
</evidence>
<evidence type="ECO:0000305" key="4"/>
<evidence type="ECO:0007829" key="5">
    <source>
        <dbReference type="PDB" id="4PQZ"/>
    </source>
</evidence>
<organism>
    <name type="scientific">Saccharomyces cerevisiae (strain ATCC 204508 / S288c)</name>
    <name type="common">Baker's yeast</name>
    <dbReference type="NCBI Taxonomy" id="559292"/>
    <lineage>
        <taxon>Eukaryota</taxon>
        <taxon>Fungi</taxon>
        <taxon>Dikarya</taxon>
        <taxon>Ascomycota</taxon>
        <taxon>Saccharomycotina</taxon>
        <taxon>Saccharomycetes</taxon>
        <taxon>Saccharomycetales</taxon>
        <taxon>Saccharomycetaceae</taxon>
        <taxon>Saccharomyces</taxon>
    </lineage>
</organism>
<dbReference type="EMBL" id="U55021">
    <property type="protein sequence ID" value="AAB47413.1"/>
    <property type="molecule type" value="Genomic_DNA"/>
</dbReference>
<dbReference type="EMBL" id="Z75074">
    <property type="protein sequence ID" value="CAA99372.1"/>
    <property type="molecule type" value="Genomic_DNA"/>
</dbReference>
<dbReference type="EMBL" id="BK006948">
    <property type="protein sequence ID" value="DAA10940.1"/>
    <property type="molecule type" value="Genomic_DNA"/>
</dbReference>
<dbReference type="PIR" id="S67054">
    <property type="entry name" value="S67054"/>
</dbReference>
<dbReference type="RefSeq" id="NP_014809.3">
    <property type="nucleotide sequence ID" value="NM_001183585.3"/>
</dbReference>
<dbReference type="PDB" id="4PQZ">
    <property type="method" value="X-ray"/>
    <property type="resolution" value="2.30 A"/>
    <property type="chains" value="A=312-458"/>
</dbReference>
<dbReference type="PDBsum" id="4PQZ"/>
<dbReference type="SMR" id="Q12104"/>
<dbReference type="BioGRID" id="34562">
    <property type="interactions" value="63"/>
</dbReference>
<dbReference type="FunCoup" id="Q12104">
    <property type="interactions" value="24"/>
</dbReference>
<dbReference type="STRING" id="4932.YOR166C"/>
<dbReference type="iPTMnet" id="Q12104"/>
<dbReference type="PaxDb" id="4932-YOR166C"/>
<dbReference type="PeptideAtlas" id="Q12104"/>
<dbReference type="EnsemblFungi" id="YOR166C_mRNA">
    <property type="protein sequence ID" value="YOR166C"/>
    <property type="gene ID" value="YOR166C"/>
</dbReference>
<dbReference type="GeneID" id="854337"/>
<dbReference type="KEGG" id="sce:YOR166C"/>
<dbReference type="AGR" id="SGD:S000005692"/>
<dbReference type="SGD" id="S000005692">
    <property type="gene designation" value="SWT1"/>
</dbReference>
<dbReference type="VEuPathDB" id="FungiDB:YOR166C"/>
<dbReference type="eggNOG" id="KOG4689">
    <property type="taxonomic scope" value="Eukaryota"/>
</dbReference>
<dbReference type="GeneTree" id="ENSGT00390000001254"/>
<dbReference type="HOGENOM" id="CLU_048317_0_0_1"/>
<dbReference type="InParanoid" id="Q12104"/>
<dbReference type="OMA" id="WANDWIY"/>
<dbReference type="OrthoDB" id="2017974at2759"/>
<dbReference type="BioCyc" id="YEAST:G3O-33682-MONOMER"/>
<dbReference type="BioGRID-ORCS" id="854337">
    <property type="hits" value="2 hits in 10 CRISPR screens"/>
</dbReference>
<dbReference type="EvolutionaryTrace" id="Q12104"/>
<dbReference type="PRO" id="PR:Q12104"/>
<dbReference type="Proteomes" id="UP000002311">
    <property type="component" value="Chromosome XV"/>
</dbReference>
<dbReference type="RNAct" id="Q12104">
    <property type="molecule type" value="protein"/>
</dbReference>
<dbReference type="GO" id="GO:0005737">
    <property type="term" value="C:cytoplasm"/>
    <property type="evidence" value="ECO:0000314"/>
    <property type="project" value="SGD"/>
</dbReference>
<dbReference type="GO" id="GO:0005634">
    <property type="term" value="C:nucleus"/>
    <property type="evidence" value="ECO:0000314"/>
    <property type="project" value="SGD"/>
</dbReference>
<dbReference type="GO" id="GO:0004521">
    <property type="term" value="F:RNA endonuclease activity"/>
    <property type="evidence" value="ECO:0000314"/>
    <property type="project" value="SGD"/>
</dbReference>
<dbReference type="GO" id="GO:0071032">
    <property type="term" value="P:nuclear mRNA surveillance of mRNP export"/>
    <property type="evidence" value="ECO:0000315"/>
    <property type="project" value="SGD"/>
</dbReference>
<dbReference type="CDD" id="cd18727">
    <property type="entry name" value="PIN_Swt1-like"/>
    <property type="match status" value="1"/>
</dbReference>
<dbReference type="FunFam" id="3.40.50.1010:FF:000045">
    <property type="entry name" value="Transcriptional protein swt1"/>
    <property type="match status" value="1"/>
</dbReference>
<dbReference type="Gene3D" id="3.40.50.1010">
    <property type="entry name" value="5'-nuclease"/>
    <property type="match status" value="1"/>
</dbReference>
<dbReference type="InterPro" id="IPR029060">
    <property type="entry name" value="PIN-like_dom_sf"/>
</dbReference>
<dbReference type="InterPro" id="IPR002716">
    <property type="entry name" value="PIN_dom"/>
</dbReference>
<dbReference type="InterPro" id="IPR049014">
    <property type="entry name" value="SWT1_C"/>
</dbReference>
<dbReference type="InterPro" id="IPR052626">
    <property type="entry name" value="SWT1_Regulator"/>
</dbReference>
<dbReference type="PANTHER" id="PTHR16161">
    <property type="entry name" value="TRANSCRIPTIONAL PROTEIN SWT1"/>
    <property type="match status" value="1"/>
</dbReference>
<dbReference type="PANTHER" id="PTHR16161:SF0">
    <property type="entry name" value="TRANSCRIPTIONAL PROTEIN SWT1"/>
    <property type="match status" value="1"/>
</dbReference>
<dbReference type="Pfam" id="PF13638">
    <property type="entry name" value="PIN_4"/>
    <property type="match status" value="1"/>
</dbReference>
<dbReference type="Pfam" id="PF21693">
    <property type="entry name" value="SWT1_3rd"/>
    <property type="match status" value="1"/>
</dbReference>
<dbReference type="SMART" id="SM00670">
    <property type="entry name" value="PINc"/>
    <property type="match status" value="1"/>
</dbReference>
<dbReference type="SUPFAM" id="SSF88723">
    <property type="entry name" value="PIN domain-like"/>
    <property type="match status" value="1"/>
</dbReference>
<protein>
    <recommendedName>
        <fullName evidence="3">Transcriptional protein SWT1</fullName>
    </recommendedName>
    <alternativeName>
        <fullName evidence="3">Synthetically lethal with TREX protein 1</fullName>
    </alternativeName>
</protein>
<keyword id="KW-0002">3D-structure</keyword>
<keyword id="KW-0010">Activator</keyword>
<keyword id="KW-0539">Nucleus</keyword>
<keyword id="KW-1185">Reference proteome</keyword>
<keyword id="KW-0804">Transcription</keyword>
<keyword id="KW-0805">Transcription regulation</keyword>
<name>SWT1_YEAST</name>
<sequence>MTDEKRAFPKGNNHIRSETFNGSVSHKISESIKDIASLRPHGKYTVQDIDNIIASTSSHENRGQSGDSNGCINHDEEGDIPMCDLNDESDVEMISEYLSSQREMEAQSVANYMPKINDDLPLLNPPTLKTAFVVDTNFIISHLNTLEKLRSLSSTYHHLIIVPTTVIQELDGLKKSPDIARDNDDTTNQEHDRTIGTLARWGNDWIYKNLANLDSGLIGQKLKQSLNPGSLKDDSILDCCLYFKEILNCFVILLSNDKNLCTKALTEDILTVSFRKNMDAKIIAMRAYEENQLRFANLRDSTVNNFDQNVTSYAHIPGIETPPLQFDKVSQNVFEQVKETIFFAIDHTLRKEYGEDIGFIDYNPDKLTTIENASNYIYLFWVSVFSELFTCSKIKKNEWKSLPTVLKSKPTNLNDLRTFEQFWETVLHFLFSKFTNEEKQSLEKQIHEWKTSINAIST</sequence>
<gene>
    <name type="primary">SWT1</name>
    <name type="ordered locus">YOR166C</name>
    <name type="ORF">O3595</name>
</gene>
<reference key="1">
    <citation type="journal article" date="1996" name="Yeast">
        <title>Analysis of a 22,956 bp region on the right arm of Saccharomyces cerevisiae chromosome XV.</title>
        <authorList>
            <person name="Madania A."/>
            <person name="Poch O."/>
            <person name="Tarassov I.A."/>
            <person name="Winsor B."/>
            <person name="Martin R.P."/>
        </authorList>
    </citation>
    <scope>NUCLEOTIDE SEQUENCE [GENOMIC DNA]</scope>
    <source>
        <strain>S288c / FY1678</strain>
    </source>
</reference>
<reference key="2">
    <citation type="journal article" date="1997" name="Nature">
        <title>The nucleotide sequence of Saccharomyces cerevisiae chromosome XV.</title>
        <authorList>
            <person name="Dujon B."/>
            <person name="Albermann K."/>
            <person name="Aldea M."/>
            <person name="Alexandraki D."/>
            <person name="Ansorge W."/>
            <person name="Arino J."/>
            <person name="Benes V."/>
            <person name="Bohn C."/>
            <person name="Bolotin-Fukuhara M."/>
            <person name="Bordonne R."/>
            <person name="Boyer J."/>
            <person name="Camasses A."/>
            <person name="Casamayor A."/>
            <person name="Casas C."/>
            <person name="Cheret G."/>
            <person name="Cziepluch C."/>
            <person name="Daignan-Fornier B."/>
            <person name="Dang V.-D."/>
            <person name="de Haan M."/>
            <person name="Delius H."/>
            <person name="Durand P."/>
            <person name="Fairhead C."/>
            <person name="Feldmann H."/>
            <person name="Gaillon L."/>
            <person name="Galisson F."/>
            <person name="Gamo F.-J."/>
            <person name="Gancedo C."/>
            <person name="Goffeau A."/>
            <person name="Goulding S.E."/>
            <person name="Grivell L.A."/>
            <person name="Habbig B."/>
            <person name="Hand N.J."/>
            <person name="Hani J."/>
            <person name="Hattenhorst U."/>
            <person name="Hebling U."/>
            <person name="Hernando Y."/>
            <person name="Herrero E."/>
            <person name="Heumann K."/>
            <person name="Hiesel R."/>
            <person name="Hilger F."/>
            <person name="Hofmann B."/>
            <person name="Hollenberg C.P."/>
            <person name="Hughes B."/>
            <person name="Jauniaux J.-C."/>
            <person name="Kalogeropoulos A."/>
            <person name="Katsoulou C."/>
            <person name="Kordes E."/>
            <person name="Lafuente M.J."/>
            <person name="Landt O."/>
            <person name="Louis E.J."/>
            <person name="Maarse A.C."/>
            <person name="Madania A."/>
            <person name="Mannhaupt G."/>
            <person name="Marck C."/>
            <person name="Martin R.P."/>
            <person name="Mewes H.-W."/>
            <person name="Michaux G."/>
            <person name="Paces V."/>
            <person name="Parle-McDermott A.G."/>
            <person name="Pearson B.M."/>
            <person name="Perrin A."/>
            <person name="Pettersson B."/>
            <person name="Poch O."/>
            <person name="Pohl T.M."/>
            <person name="Poirey R."/>
            <person name="Portetelle D."/>
            <person name="Pujol A."/>
            <person name="Purnelle B."/>
            <person name="Ramezani Rad M."/>
            <person name="Rechmann S."/>
            <person name="Schwager C."/>
            <person name="Schweizer M."/>
            <person name="Sor F."/>
            <person name="Sterky F."/>
            <person name="Tarassov I.A."/>
            <person name="Teodoru C."/>
            <person name="Tettelin H."/>
            <person name="Thierry A."/>
            <person name="Tobiasch E."/>
            <person name="Tzermia M."/>
            <person name="Uhlen M."/>
            <person name="Unseld M."/>
            <person name="Valens M."/>
            <person name="Vandenbol M."/>
            <person name="Vetter I."/>
            <person name="Vlcek C."/>
            <person name="Voet M."/>
            <person name="Volckaert G."/>
            <person name="Voss H."/>
            <person name="Wambutt R."/>
            <person name="Wedler H."/>
            <person name="Wiemann S."/>
            <person name="Winsor B."/>
            <person name="Wolfe K.H."/>
            <person name="Zollner A."/>
            <person name="Zumstein E."/>
            <person name="Kleine K."/>
        </authorList>
    </citation>
    <scope>NUCLEOTIDE SEQUENCE [LARGE SCALE GENOMIC DNA]</scope>
    <source>
        <strain>ATCC 204508 / S288c</strain>
    </source>
</reference>
<reference key="3">
    <citation type="journal article" date="2014" name="G3 (Bethesda)">
        <title>The reference genome sequence of Saccharomyces cerevisiae: Then and now.</title>
        <authorList>
            <person name="Engel S.R."/>
            <person name="Dietrich F.S."/>
            <person name="Fisk D.G."/>
            <person name="Binkley G."/>
            <person name="Balakrishnan R."/>
            <person name="Costanzo M.C."/>
            <person name="Dwight S.S."/>
            <person name="Hitz B.C."/>
            <person name="Karra K."/>
            <person name="Nash R.S."/>
            <person name="Weng S."/>
            <person name="Wong E.D."/>
            <person name="Lloyd P."/>
            <person name="Skrzypek M.S."/>
            <person name="Miyasato S.R."/>
            <person name="Simison M."/>
            <person name="Cherry J.M."/>
        </authorList>
    </citation>
    <scope>GENOME REANNOTATION</scope>
    <source>
        <strain>ATCC 204508 / S288c</strain>
    </source>
</reference>
<reference key="4">
    <citation type="journal article" date="2006" name="J. Biol. Chem.">
        <title>Swt1, a novel yeast protein, functions in transcription.</title>
        <authorList>
            <person name="Roether S."/>
            <person name="Clausing E."/>
            <person name="Kieser A."/>
            <person name="Straesser K."/>
        </authorList>
    </citation>
    <scope>FUNCTION</scope>
    <scope>INTERACTION WITH THE TREX COMPLEX AND RNA POLYMERASE II</scope>
    <scope>SUBCELLULAR LOCATION</scope>
    <scope>MUTAGENESIS OF 1-MET--LYS-115 AND 260-LEU--THR-458</scope>
    <scope>DELETION MUTANT</scope>
</reference>
<reference key="5">
    <citation type="journal article" date="2006" name="Nucleic Acids Res.">
        <title>Transcriptional activators in yeast.</title>
        <authorList>
            <person name="Titz B."/>
            <person name="Thomas S."/>
            <person name="Rajagopala S.V."/>
            <person name="Chiba T."/>
            <person name="Ito T."/>
            <person name="Uetz P."/>
        </authorList>
    </citation>
    <scope>FUNCTION</scope>
</reference>
<feature type="chain" id="PRO_0000237661" description="Transcriptional protein SWT1">
    <location>
        <begin position="1"/>
        <end position="458"/>
    </location>
</feature>
<feature type="domain" description="PINc">
    <location>
        <begin position="130"/>
        <end position="262"/>
    </location>
</feature>
<feature type="mutagenesis site" description="Fully functional; when associated with deletion of 260-L--T-458." evidence="2">
    <location>
        <begin position="1"/>
        <end position="115"/>
    </location>
</feature>
<feature type="mutagenesis site" description="Fully functional; when associated with deletion of 1-M--K-115." evidence="2">
    <location>
        <begin position="260"/>
        <end position="458"/>
    </location>
</feature>
<feature type="helix" evidence="5">
    <location>
        <begin position="326"/>
        <end position="353"/>
    </location>
</feature>
<feature type="helix" evidence="5">
    <location>
        <begin position="354"/>
        <end position="357"/>
    </location>
</feature>
<feature type="turn" evidence="5">
    <location>
        <begin position="358"/>
        <end position="361"/>
    </location>
</feature>
<feature type="helix" evidence="5">
    <location>
        <begin position="370"/>
        <end position="379"/>
    </location>
</feature>
<feature type="turn" evidence="5">
    <location>
        <begin position="380"/>
        <end position="384"/>
    </location>
</feature>
<feature type="helix" evidence="5">
    <location>
        <begin position="385"/>
        <end position="388"/>
    </location>
</feature>
<feature type="turn" evidence="5">
    <location>
        <begin position="389"/>
        <end position="391"/>
    </location>
</feature>
<feature type="helix" evidence="5">
    <location>
        <begin position="396"/>
        <end position="399"/>
    </location>
</feature>
<feature type="helix" evidence="5">
    <location>
        <begin position="404"/>
        <end position="407"/>
    </location>
</feature>
<feature type="helix" evidence="5">
    <location>
        <begin position="413"/>
        <end position="430"/>
    </location>
</feature>
<feature type="turn" evidence="5">
    <location>
        <begin position="431"/>
        <end position="433"/>
    </location>
</feature>
<feature type="helix" evidence="5">
    <location>
        <begin position="436"/>
        <end position="454"/>
    </location>
</feature>